<dbReference type="EC" id="3.4.23.24"/>
<dbReference type="EMBL" id="CM000310">
    <property type="protein sequence ID" value="EEQ44564.1"/>
    <property type="molecule type" value="Genomic_DNA"/>
</dbReference>
<dbReference type="SMR" id="C4YNQ5"/>
<dbReference type="MEROPS" id="A01.061"/>
<dbReference type="GlyCosmos" id="C4YNQ5">
    <property type="glycosylation" value="2 sites, No reported glycans"/>
</dbReference>
<dbReference type="PaxDb" id="5476-C4YNQ5"/>
<dbReference type="VEuPathDB" id="FungiDB:CAWG_02837"/>
<dbReference type="HOGENOM" id="CLU_013253_9_1_1"/>
<dbReference type="OMA" id="SISEPNW"/>
<dbReference type="OrthoDB" id="20489at766764"/>
<dbReference type="Proteomes" id="UP000001429">
    <property type="component" value="Chromosome 3"/>
</dbReference>
<dbReference type="GO" id="GO:0005576">
    <property type="term" value="C:extracellular region"/>
    <property type="evidence" value="ECO:0007669"/>
    <property type="project" value="UniProtKB-SubCell"/>
</dbReference>
<dbReference type="GO" id="GO:0004190">
    <property type="term" value="F:aspartic-type endopeptidase activity"/>
    <property type="evidence" value="ECO:0007669"/>
    <property type="project" value="UniProtKB-KW"/>
</dbReference>
<dbReference type="GO" id="GO:0006508">
    <property type="term" value="P:proteolysis"/>
    <property type="evidence" value="ECO:0007669"/>
    <property type="project" value="UniProtKB-KW"/>
</dbReference>
<dbReference type="CDD" id="cd05474">
    <property type="entry name" value="SAP_like"/>
    <property type="match status" value="1"/>
</dbReference>
<dbReference type="FunFam" id="2.40.70.10:FF:000011">
    <property type="entry name" value="Aspartic protease"/>
    <property type="match status" value="1"/>
</dbReference>
<dbReference type="FunFam" id="2.40.70.10:FF:000023">
    <property type="entry name" value="Aspartic protease"/>
    <property type="match status" value="1"/>
</dbReference>
<dbReference type="Gene3D" id="2.40.70.10">
    <property type="entry name" value="Acid Proteases"/>
    <property type="match status" value="2"/>
</dbReference>
<dbReference type="InterPro" id="IPR001461">
    <property type="entry name" value="Aspartic_peptidase_A1"/>
</dbReference>
<dbReference type="InterPro" id="IPR001969">
    <property type="entry name" value="Aspartic_peptidase_AS"/>
</dbReference>
<dbReference type="InterPro" id="IPR033121">
    <property type="entry name" value="PEPTIDASE_A1"/>
</dbReference>
<dbReference type="InterPro" id="IPR021109">
    <property type="entry name" value="Peptidase_aspartic_dom_sf"/>
</dbReference>
<dbReference type="InterPro" id="IPR033876">
    <property type="entry name" value="SAP-like"/>
</dbReference>
<dbReference type="PANTHER" id="PTHR47966:SF65">
    <property type="entry name" value="ASPARTIC-TYPE ENDOPEPTIDASE"/>
    <property type="match status" value="1"/>
</dbReference>
<dbReference type="PANTHER" id="PTHR47966">
    <property type="entry name" value="BETA-SITE APP-CLEAVING ENZYME, ISOFORM A-RELATED"/>
    <property type="match status" value="1"/>
</dbReference>
<dbReference type="Pfam" id="PF00026">
    <property type="entry name" value="Asp"/>
    <property type="match status" value="1"/>
</dbReference>
<dbReference type="PRINTS" id="PR00792">
    <property type="entry name" value="PEPSIN"/>
</dbReference>
<dbReference type="SUPFAM" id="SSF50630">
    <property type="entry name" value="Acid proteases"/>
    <property type="match status" value="1"/>
</dbReference>
<dbReference type="PROSITE" id="PS00141">
    <property type="entry name" value="ASP_PROTEASE"/>
    <property type="match status" value="2"/>
</dbReference>
<dbReference type="PROSITE" id="PS51767">
    <property type="entry name" value="PEPTIDASE_A1"/>
    <property type="match status" value="1"/>
</dbReference>
<accession>C4YNQ5</accession>
<accession>P43092</accession>
<accession>Q5ANA2</accession>
<reference key="1">
    <citation type="journal article" date="2009" name="Nature">
        <title>Evolution of pathogenicity and sexual reproduction in eight Candida genomes.</title>
        <authorList>
            <person name="Butler G."/>
            <person name="Rasmussen M.D."/>
            <person name="Lin M.F."/>
            <person name="Santos M.A.S."/>
            <person name="Sakthikumar S."/>
            <person name="Munro C.A."/>
            <person name="Rheinbay E."/>
            <person name="Grabherr M."/>
            <person name="Forche A."/>
            <person name="Reedy J.L."/>
            <person name="Agrafioti I."/>
            <person name="Arnaud M.B."/>
            <person name="Bates S."/>
            <person name="Brown A.J.P."/>
            <person name="Brunke S."/>
            <person name="Costanzo M.C."/>
            <person name="Fitzpatrick D.A."/>
            <person name="de Groot P.W.J."/>
            <person name="Harris D."/>
            <person name="Hoyer L.L."/>
            <person name="Hube B."/>
            <person name="Klis F.M."/>
            <person name="Kodira C."/>
            <person name="Lennard N."/>
            <person name="Logue M.E."/>
            <person name="Martin R."/>
            <person name="Neiman A.M."/>
            <person name="Nikolaou E."/>
            <person name="Quail M.A."/>
            <person name="Quinn J."/>
            <person name="Santos M.C."/>
            <person name="Schmitzberger F.F."/>
            <person name="Sherlock G."/>
            <person name="Shah P."/>
            <person name="Silverstein K.A.T."/>
            <person name="Skrzypek M.S."/>
            <person name="Soll D."/>
            <person name="Staggs R."/>
            <person name="Stansfield I."/>
            <person name="Stumpf M.P.H."/>
            <person name="Sudbery P.E."/>
            <person name="Srikantha T."/>
            <person name="Zeng Q."/>
            <person name="Berman J."/>
            <person name="Berriman M."/>
            <person name="Heitman J."/>
            <person name="Gow N.A.R."/>
            <person name="Lorenz M.C."/>
            <person name="Birren B.W."/>
            <person name="Kellis M."/>
            <person name="Cuomo C.A."/>
        </authorList>
    </citation>
    <scope>NUCLEOTIDE SEQUENCE [LARGE SCALE GENOMIC DNA]</scope>
    <source>
        <strain>WO-1</strain>
    </source>
</reference>
<reference key="2">
    <citation type="journal article" date="1993" name="J. Bacteriol.">
        <title>Three distinct secreted aspartyl proteinases in Candida albicans.</title>
        <authorList>
            <person name="White T.C."/>
            <person name="Miyasaki S.H."/>
            <person name="Agabian N."/>
        </authorList>
    </citation>
    <scope>PROTEIN SEQUENCE OF 59-73</scope>
    <source>
        <strain>WO-1</strain>
    </source>
</reference>
<comment type="catalytic activity">
    <reaction>
        <text>Preferential cleavage at the carboxyl of hydrophobic amino acids, but fails to cleave 15-Leu-|-Tyr-16, 16-Tyr-|-Leu-17 and 24-Phe-|-Phe-25 of insulin B chain. Activates trypsinogen, and degrades keratin.</text>
        <dbReference type="EC" id="3.4.23.24"/>
    </reaction>
</comment>
<comment type="subcellular location">
    <subcellularLocation>
        <location>Secreted</location>
    </subcellularLocation>
</comment>
<comment type="PTM">
    <text evidence="1">O-glycosylated.</text>
</comment>
<comment type="miscellaneous">
    <text>Expressed exclusively in O (opaque) cells and not in W (white) cells of strain WO-1.</text>
</comment>
<comment type="similarity">
    <text evidence="8">Belongs to the peptidase A1 family.</text>
</comment>
<sequence length="398" mass="42716">MFLKNIFIALAIALLADATPTTSNNSPGFVALNFDVIKTHKNVTGPQGEINTNVNVKRQTVPVKLINEQVSYASDITVGSNKQKLTVVIDTGSSDLWVPDSQVSCQAGQGQDPNFCKNEGTYSPSSSSSSQNLNSPFSIEYGDGTTSQGTWYKDTIGFGGISITKQQFADVTSTSVDQGILGIGYKTHEAEGNYDNVPVTLKNQGIISKNAYSLYLNSRQATSGQIIFGGVDNAKYSGALIALPVTSDNELRIHLNTVKVAGQSINADVDVLLDSGTTITYLQQGVADQVISAFNGQETYDANGNLFYLVDCNLSGSVDFAFDKNAKISVPASEFTAPLYTEDGQVYDQCQLLFGTSDYNILGDNFLRSAYIVYDLDDNEISLAQVKYTTASNIAALT</sequence>
<gene>
    <name type="primary">SAP3</name>
    <name type="ORF">CAWG_02837</name>
</gene>
<keyword id="KW-0064">Aspartyl protease</keyword>
<keyword id="KW-0165">Cleavage on pair of basic residues</keyword>
<keyword id="KW-0903">Direct protein sequencing</keyword>
<keyword id="KW-1015">Disulfide bond</keyword>
<keyword id="KW-0325">Glycoprotein</keyword>
<keyword id="KW-0378">Hydrolase</keyword>
<keyword id="KW-0645">Protease</keyword>
<keyword id="KW-0964">Secreted</keyword>
<keyword id="KW-0732">Signal</keyword>
<keyword id="KW-0865">Zymogen</keyword>
<protein>
    <recommendedName>
        <fullName>Candidapepsin-3</fullName>
        <ecNumber>3.4.23.24</ecNumber>
    </recommendedName>
    <alternativeName>
        <fullName>ACP 3</fullName>
    </alternativeName>
    <alternativeName>
        <fullName>Aspartate protease 3</fullName>
    </alternativeName>
    <alternativeName>
        <fullName>Secreted aspartic protease 3</fullName>
    </alternativeName>
</protein>
<feature type="signal peptide" evidence="3">
    <location>
        <begin position="1"/>
        <end position="18"/>
    </location>
</feature>
<feature type="propeptide" id="PRO_0000413054" description="Activation peptide" evidence="7">
    <location>
        <begin position="19"/>
        <end position="58"/>
    </location>
</feature>
<feature type="chain" id="PRO_0000413055" description="Candidapepsin-3">
    <location>
        <begin position="59"/>
        <end position="398"/>
    </location>
</feature>
<feature type="domain" description="Peptidase A1" evidence="4">
    <location>
        <begin position="72"/>
        <end position="384"/>
    </location>
</feature>
<feature type="region of interest" description="Disordered" evidence="6">
    <location>
        <begin position="103"/>
        <end position="139"/>
    </location>
</feature>
<feature type="compositionally biased region" description="Polar residues" evidence="6">
    <location>
        <begin position="103"/>
        <end position="112"/>
    </location>
</feature>
<feature type="compositionally biased region" description="Low complexity" evidence="6">
    <location>
        <begin position="123"/>
        <end position="138"/>
    </location>
</feature>
<feature type="active site" evidence="5">
    <location>
        <position position="90"/>
    </location>
</feature>
<feature type="active site" evidence="5">
    <location>
        <position position="274"/>
    </location>
</feature>
<feature type="binding site" evidence="2">
    <location>
        <begin position="90"/>
        <end position="92"/>
    </location>
    <ligand>
        <name>pepstatin A</name>
        <dbReference type="ChEBI" id="CHEBI:190525"/>
        <note>inhibitor</note>
    </ligand>
</feature>
<feature type="binding site" evidence="2">
    <location>
        <begin position="140"/>
        <end position="143"/>
    </location>
    <ligand>
        <name>pepstatin A</name>
        <dbReference type="ChEBI" id="CHEBI:190525"/>
        <note>inhibitor</note>
    </ligand>
</feature>
<feature type="binding site" evidence="2">
    <location>
        <begin position="274"/>
        <end position="278"/>
    </location>
    <ligand>
        <name>pepstatin A</name>
        <dbReference type="ChEBI" id="CHEBI:190525"/>
        <note>inhibitor</note>
    </ligand>
</feature>
<feature type="glycosylation site" description="N-linked (GlcNAc...) asparagine" evidence="3">
    <location>
        <position position="42"/>
    </location>
</feature>
<feature type="glycosylation site" description="N-linked (GlcNAc...) asparagine" evidence="3">
    <location>
        <position position="313"/>
    </location>
</feature>
<feature type="disulfide bond" evidence="1">
    <location>
        <begin position="105"/>
        <end position="116"/>
    </location>
</feature>
<feature type="disulfide bond" evidence="1">
    <location>
        <begin position="312"/>
        <end position="350"/>
    </location>
</feature>
<evidence type="ECO:0000250" key="1"/>
<evidence type="ECO:0000250" key="2">
    <source>
        <dbReference type="UniProtKB" id="P0CY29"/>
    </source>
</evidence>
<evidence type="ECO:0000255" key="3"/>
<evidence type="ECO:0000255" key="4">
    <source>
        <dbReference type="PROSITE-ProRule" id="PRU01103"/>
    </source>
</evidence>
<evidence type="ECO:0000255" key="5">
    <source>
        <dbReference type="PROSITE-ProRule" id="PRU10094"/>
    </source>
</evidence>
<evidence type="ECO:0000256" key="6">
    <source>
        <dbReference type="SAM" id="MobiDB-lite"/>
    </source>
</evidence>
<evidence type="ECO:0000269" key="7">
    <source>
    </source>
</evidence>
<evidence type="ECO:0000305" key="8"/>
<name>CARP3_CANAW</name>
<proteinExistence type="evidence at protein level"/>
<organism>
    <name type="scientific">Candida albicans (strain WO-1)</name>
    <name type="common">Yeast</name>
    <dbReference type="NCBI Taxonomy" id="294748"/>
    <lineage>
        <taxon>Eukaryota</taxon>
        <taxon>Fungi</taxon>
        <taxon>Dikarya</taxon>
        <taxon>Ascomycota</taxon>
        <taxon>Saccharomycotina</taxon>
        <taxon>Pichiomycetes</taxon>
        <taxon>Debaryomycetaceae</taxon>
        <taxon>Candida/Lodderomyces clade</taxon>
        <taxon>Candida</taxon>
    </lineage>
</organism>